<sequence>MYTPEAIGTPLTPSSLKVLLLGASELGRELAIALQRLGIEVHAADRYAGAPAHLVANKAHVLDIHDEDAIRQLVREVGPHFVIPDSETIPAEVLQEIETNEVASVVPTALANRLTMNREGIRTFAHDKLGLPNSTFRFASTADELARAAEEIGYPCVVKPVMSSSGAGQSYVGGVDELEAAWNAALKHSRTNAQRVMVEQYIPFDYEVTILAVRSIDPATGREATWFCEPIGHRQDRGDYVESWQPAHMSEDALDTARSIAARIATALGGRGVYGVELFVKGDDVYFSEVSPRLHDTGMVTLGTQRFSEFDLHARAILGLPIDTTLISPGASAVIRCEDKHDGDIEYAGVNKAMAVEETNIYLFGKPRALARRRMGVAVATAENIDQARQRAEEAAGYIEVRPTVFAEGGQ</sequence>
<keyword id="KW-0067">ATP-binding</keyword>
<keyword id="KW-0436">Ligase</keyword>
<keyword id="KW-0460">Magnesium</keyword>
<keyword id="KW-0479">Metal-binding</keyword>
<keyword id="KW-0547">Nucleotide-binding</keyword>
<keyword id="KW-0658">Purine biosynthesis</keyword>
<keyword id="KW-1185">Reference proteome</keyword>
<proteinExistence type="inferred from homology"/>
<gene>
    <name evidence="1" type="primary">purT</name>
    <name type="ordered locus">jk0239</name>
</gene>
<accession>Q4JXR6</accession>
<name>PURT_CORJK</name>
<organism>
    <name type="scientific">Corynebacterium jeikeium (strain K411)</name>
    <dbReference type="NCBI Taxonomy" id="306537"/>
    <lineage>
        <taxon>Bacteria</taxon>
        <taxon>Bacillati</taxon>
        <taxon>Actinomycetota</taxon>
        <taxon>Actinomycetes</taxon>
        <taxon>Mycobacteriales</taxon>
        <taxon>Corynebacteriaceae</taxon>
        <taxon>Corynebacterium</taxon>
    </lineage>
</organism>
<comment type="function">
    <text evidence="1">Involved in the de novo purine biosynthesis. Catalyzes the transfer of formate to 5-phospho-ribosyl-glycinamide (GAR), producing 5-phospho-ribosyl-N-formylglycinamide (FGAR). Formate is provided by PurU via hydrolysis of 10-formyl-tetrahydrofolate.</text>
</comment>
<comment type="catalytic activity">
    <reaction evidence="1">
        <text>N(1)-(5-phospho-beta-D-ribosyl)glycinamide + formate + ATP = N(2)-formyl-N(1)-(5-phospho-beta-D-ribosyl)glycinamide + ADP + phosphate + H(+)</text>
        <dbReference type="Rhea" id="RHEA:24829"/>
        <dbReference type="ChEBI" id="CHEBI:15378"/>
        <dbReference type="ChEBI" id="CHEBI:15740"/>
        <dbReference type="ChEBI" id="CHEBI:30616"/>
        <dbReference type="ChEBI" id="CHEBI:43474"/>
        <dbReference type="ChEBI" id="CHEBI:143788"/>
        <dbReference type="ChEBI" id="CHEBI:147286"/>
        <dbReference type="ChEBI" id="CHEBI:456216"/>
        <dbReference type="EC" id="6.3.1.21"/>
    </reaction>
    <physiologicalReaction direction="left-to-right" evidence="1">
        <dbReference type="Rhea" id="RHEA:24830"/>
    </physiologicalReaction>
</comment>
<comment type="pathway">
    <text evidence="1">Purine metabolism; IMP biosynthesis via de novo pathway; N(2)-formyl-N(1)-(5-phospho-D-ribosyl)glycinamide from N(1)-(5-phospho-D-ribosyl)glycinamide (formate route): step 1/1.</text>
</comment>
<comment type="subunit">
    <text evidence="1">Homodimer.</text>
</comment>
<comment type="similarity">
    <text evidence="1">Belongs to the PurK/PurT family.</text>
</comment>
<dbReference type="EC" id="6.3.1.21" evidence="1"/>
<dbReference type="EMBL" id="CR931997">
    <property type="protein sequence ID" value="CAI36391.1"/>
    <property type="molecule type" value="Genomic_DNA"/>
</dbReference>
<dbReference type="RefSeq" id="WP_011272961.1">
    <property type="nucleotide sequence ID" value="NC_007164.1"/>
</dbReference>
<dbReference type="SMR" id="Q4JXR6"/>
<dbReference type="STRING" id="306537.jk0239"/>
<dbReference type="KEGG" id="cjk:jk0239"/>
<dbReference type="PATRIC" id="fig|306537.10.peg.249"/>
<dbReference type="eggNOG" id="COG0027">
    <property type="taxonomic scope" value="Bacteria"/>
</dbReference>
<dbReference type="HOGENOM" id="CLU_011534_1_3_11"/>
<dbReference type="OrthoDB" id="9804625at2"/>
<dbReference type="UniPathway" id="UPA00074">
    <property type="reaction ID" value="UER00127"/>
</dbReference>
<dbReference type="Proteomes" id="UP000000545">
    <property type="component" value="Chromosome"/>
</dbReference>
<dbReference type="GO" id="GO:0005829">
    <property type="term" value="C:cytosol"/>
    <property type="evidence" value="ECO:0007669"/>
    <property type="project" value="TreeGrafter"/>
</dbReference>
<dbReference type="GO" id="GO:0005524">
    <property type="term" value="F:ATP binding"/>
    <property type="evidence" value="ECO:0007669"/>
    <property type="project" value="UniProtKB-UniRule"/>
</dbReference>
<dbReference type="GO" id="GO:0000287">
    <property type="term" value="F:magnesium ion binding"/>
    <property type="evidence" value="ECO:0007669"/>
    <property type="project" value="InterPro"/>
</dbReference>
<dbReference type="GO" id="GO:0043815">
    <property type="term" value="F:phosphoribosylglycinamide formyltransferase 2 activity"/>
    <property type="evidence" value="ECO:0007669"/>
    <property type="project" value="UniProtKB-UniRule"/>
</dbReference>
<dbReference type="GO" id="GO:0004644">
    <property type="term" value="F:phosphoribosylglycinamide formyltransferase activity"/>
    <property type="evidence" value="ECO:0007669"/>
    <property type="project" value="InterPro"/>
</dbReference>
<dbReference type="GO" id="GO:0006189">
    <property type="term" value="P:'de novo' IMP biosynthetic process"/>
    <property type="evidence" value="ECO:0007669"/>
    <property type="project" value="UniProtKB-UniRule"/>
</dbReference>
<dbReference type="Gene3D" id="3.40.50.20">
    <property type="match status" value="1"/>
</dbReference>
<dbReference type="Gene3D" id="3.30.1490.20">
    <property type="entry name" value="ATP-grasp fold, A domain"/>
    <property type="match status" value="1"/>
</dbReference>
<dbReference type="Gene3D" id="3.30.470.20">
    <property type="entry name" value="ATP-grasp fold, B domain"/>
    <property type="match status" value="1"/>
</dbReference>
<dbReference type="HAMAP" id="MF_01643">
    <property type="entry name" value="PurT"/>
    <property type="match status" value="1"/>
</dbReference>
<dbReference type="InterPro" id="IPR011761">
    <property type="entry name" value="ATP-grasp"/>
</dbReference>
<dbReference type="InterPro" id="IPR003135">
    <property type="entry name" value="ATP-grasp_carboxylate-amine"/>
</dbReference>
<dbReference type="InterPro" id="IPR013815">
    <property type="entry name" value="ATP_grasp_subdomain_1"/>
</dbReference>
<dbReference type="InterPro" id="IPR016185">
    <property type="entry name" value="PreATP-grasp_dom_sf"/>
</dbReference>
<dbReference type="InterPro" id="IPR005862">
    <property type="entry name" value="PurT"/>
</dbReference>
<dbReference type="InterPro" id="IPR054350">
    <property type="entry name" value="PurT/PurK_preATP-grasp"/>
</dbReference>
<dbReference type="InterPro" id="IPR048740">
    <property type="entry name" value="PurT_C"/>
</dbReference>
<dbReference type="InterPro" id="IPR011054">
    <property type="entry name" value="Rudment_hybrid_motif"/>
</dbReference>
<dbReference type="NCBIfam" id="NF006766">
    <property type="entry name" value="PRK09288.1"/>
    <property type="match status" value="1"/>
</dbReference>
<dbReference type="NCBIfam" id="TIGR01142">
    <property type="entry name" value="purT"/>
    <property type="match status" value="1"/>
</dbReference>
<dbReference type="PANTHER" id="PTHR43055">
    <property type="entry name" value="FORMATE-DEPENDENT PHOSPHORIBOSYLGLYCINAMIDE FORMYLTRANSFERASE"/>
    <property type="match status" value="1"/>
</dbReference>
<dbReference type="PANTHER" id="PTHR43055:SF1">
    <property type="entry name" value="FORMATE-DEPENDENT PHOSPHORIBOSYLGLYCINAMIDE FORMYLTRANSFERASE"/>
    <property type="match status" value="1"/>
</dbReference>
<dbReference type="Pfam" id="PF02222">
    <property type="entry name" value="ATP-grasp"/>
    <property type="match status" value="1"/>
</dbReference>
<dbReference type="Pfam" id="PF21244">
    <property type="entry name" value="PurT_C"/>
    <property type="match status" value="1"/>
</dbReference>
<dbReference type="Pfam" id="PF22660">
    <property type="entry name" value="RS_preATP-grasp-like"/>
    <property type="match status" value="1"/>
</dbReference>
<dbReference type="SUPFAM" id="SSF56059">
    <property type="entry name" value="Glutathione synthetase ATP-binding domain-like"/>
    <property type="match status" value="1"/>
</dbReference>
<dbReference type="SUPFAM" id="SSF52440">
    <property type="entry name" value="PreATP-grasp domain"/>
    <property type="match status" value="1"/>
</dbReference>
<dbReference type="SUPFAM" id="SSF51246">
    <property type="entry name" value="Rudiment single hybrid motif"/>
    <property type="match status" value="1"/>
</dbReference>
<dbReference type="PROSITE" id="PS50975">
    <property type="entry name" value="ATP_GRASP"/>
    <property type="match status" value="1"/>
</dbReference>
<reference key="1">
    <citation type="journal article" date="2005" name="J. Bacteriol.">
        <title>Complete genome sequence and analysis of the multiresistant nosocomial pathogen Corynebacterium jeikeium K411, a lipid-requiring bacterium of the human skin flora.</title>
        <authorList>
            <person name="Tauch A."/>
            <person name="Kaiser O."/>
            <person name="Hain T."/>
            <person name="Goesmann A."/>
            <person name="Weisshaar B."/>
            <person name="Albersmeier A."/>
            <person name="Bekel T."/>
            <person name="Bischoff N."/>
            <person name="Brune I."/>
            <person name="Chakraborty T."/>
            <person name="Kalinowski J."/>
            <person name="Meyer F."/>
            <person name="Rupp O."/>
            <person name="Schneiker S."/>
            <person name="Viehoever P."/>
            <person name="Puehler A."/>
        </authorList>
    </citation>
    <scope>NUCLEOTIDE SEQUENCE [LARGE SCALE GENOMIC DNA]</scope>
    <source>
        <strain>K411</strain>
    </source>
</reference>
<evidence type="ECO:0000255" key="1">
    <source>
        <dbReference type="HAMAP-Rule" id="MF_01643"/>
    </source>
</evidence>
<feature type="chain" id="PRO_0000319154" description="Formate-dependent phosphoribosylglycinamide formyltransferase">
    <location>
        <begin position="1"/>
        <end position="411"/>
    </location>
</feature>
<feature type="domain" description="ATP-grasp" evidence="1">
    <location>
        <begin position="123"/>
        <end position="318"/>
    </location>
</feature>
<feature type="binding site" evidence="1">
    <location>
        <begin position="25"/>
        <end position="26"/>
    </location>
    <ligand>
        <name>N(1)-(5-phospho-beta-D-ribosyl)glycinamide</name>
        <dbReference type="ChEBI" id="CHEBI:143788"/>
    </ligand>
</feature>
<feature type="binding site" evidence="1">
    <location>
        <position position="118"/>
    </location>
    <ligand>
        <name>ATP</name>
        <dbReference type="ChEBI" id="CHEBI:30616"/>
    </ligand>
</feature>
<feature type="binding site" evidence="1">
    <location>
        <position position="159"/>
    </location>
    <ligand>
        <name>ATP</name>
        <dbReference type="ChEBI" id="CHEBI:30616"/>
    </ligand>
</feature>
<feature type="binding site" evidence="1">
    <location>
        <begin position="164"/>
        <end position="169"/>
    </location>
    <ligand>
        <name>ATP</name>
        <dbReference type="ChEBI" id="CHEBI:30616"/>
    </ligand>
</feature>
<feature type="binding site" evidence="1">
    <location>
        <begin position="199"/>
        <end position="202"/>
    </location>
    <ligand>
        <name>ATP</name>
        <dbReference type="ChEBI" id="CHEBI:30616"/>
    </ligand>
</feature>
<feature type="binding site" evidence="1">
    <location>
        <position position="207"/>
    </location>
    <ligand>
        <name>ATP</name>
        <dbReference type="ChEBI" id="CHEBI:30616"/>
    </ligand>
</feature>
<feature type="binding site" evidence="1">
    <location>
        <position position="277"/>
    </location>
    <ligand>
        <name>Mg(2+)</name>
        <dbReference type="ChEBI" id="CHEBI:18420"/>
    </ligand>
</feature>
<feature type="binding site" evidence="1">
    <location>
        <position position="289"/>
    </location>
    <ligand>
        <name>Mg(2+)</name>
        <dbReference type="ChEBI" id="CHEBI:18420"/>
    </ligand>
</feature>
<feature type="binding site" evidence="1">
    <location>
        <position position="296"/>
    </location>
    <ligand>
        <name>N(1)-(5-phospho-beta-D-ribosyl)glycinamide</name>
        <dbReference type="ChEBI" id="CHEBI:143788"/>
    </ligand>
</feature>
<feature type="binding site" evidence="1">
    <location>
        <position position="366"/>
    </location>
    <ligand>
        <name>N(1)-(5-phospho-beta-D-ribosyl)glycinamide</name>
        <dbReference type="ChEBI" id="CHEBI:143788"/>
    </ligand>
</feature>
<feature type="binding site" evidence="1">
    <location>
        <begin position="373"/>
        <end position="374"/>
    </location>
    <ligand>
        <name>N(1)-(5-phospho-beta-D-ribosyl)glycinamide</name>
        <dbReference type="ChEBI" id="CHEBI:143788"/>
    </ligand>
</feature>
<protein>
    <recommendedName>
        <fullName evidence="1">Formate-dependent phosphoribosylglycinamide formyltransferase</fullName>
        <ecNumber evidence="1">6.3.1.21</ecNumber>
    </recommendedName>
    <alternativeName>
        <fullName evidence="1">5'-phosphoribosylglycinamide transformylase 2</fullName>
    </alternativeName>
    <alternativeName>
        <fullName evidence="1">Formate-dependent GAR transformylase</fullName>
    </alternativeName>
    <alternativeName>
        <fullName evidence="1">GAR transformylase 2</fullName>
        <shortName evidence="1">GART 2</shortName>
    </alternativeName>
    <alternativeName>
        <fullName evidence="1">Non-folate glycinamide ribonucleotide transformylase</fullName>
    </alternativeName>
    <alternativeName>
        <fullName evidence="1">Phosphoribosylglycinamide formyltransferase 2</fullName>
    </alternativeName>
</protein>